<proteinExistence type="inferred from homology"/>
<accession>A6MMI0</accession>
<dbReference type="EC" id="7.1.1.-"/>
<dbReference type="EMBL" id="EF380352">
    <property type="protein sequence ID" value="ABQ43317.1"/>
    <property type="molecule type" value="Genomic_DNA"/>
</dbReference>
<dbReference type="RefSeq" id="YP_001294156.1">
    <property type="nucleotide sequence ID" value="NC_009598.1"/>
</dbReference>
<dbReference type="SMR" id="A6MMI0"/>
<dbReference type="GeneID" id="5236518"/>
<dbReference type="GO" id="GO:0009535">
    <property type="term" value="C:chloroplast thylakoid membrane"/>
    <property type="evidence" value="ECO:0007669"/>
    <property type="project" value="UniProtKB-SubCell"/>
</dbReference>
<dbReference type="GO" id="GO:0008137">
    <property type="term" value="F:NADH dehydrogenase (ubiquinone) activity"/>
    <property type="evidence" value="ECO:0007669"/>
    <property type="project" value="InterPro"/>
</dbReference>
<dbReference type="GO" id="GO:0048038">
    <property type="term" value="F:quinone binding"/>
    <property type="evidence" value="ECO:0007669"/>
    <property type="project" value="UniProtKB-KW"/>
</dbReference>
<dbReference type="GO" id="GO:0042773">
    <property type="term" value="P:ATP synthesis coupled electron transport"/>
    <property type="evidence" value="ECO:0007669"/>
    <property type="project" value="InterPro"/>
</dbReference>
<dbReference type="GO" id="GO:0015990">
    <property type="term" value="P:electron transport coupled proton transport"/>
    <property type="evidence" value="ECO:0007669"/>
    <property type="project" value="TreeGrafter"/>
</dbReference>
<dbReference type="Gene3D" id="1.20.5.2700">
    <property type="match status" value="1"/>
</dbReference>
<dbReference type="InterPro" id="IPR002128">
    <property type="entry name" value="NADH_UbQ_OxRdtase_chlpt_su5_C"/>
</dbReference>
<dbReference type="InterPro" id="IPR018393">
    <property type="entry name" value="NADHpl_OxRdtase_5_subgr"/>
</dbReference>
<dbReference type="InterPro" id="IPR001750">
    <property type="entry name" value="ND/Mrp_TM"/>
</dbReference>
<dbReference type="InterPro" id="IPR003945">
    <property type="entry name" value="NU5C-like"/>
</dbReference>
<dbReference type="InterPro" id="IPR001516">
    <property type="entry name" value="Proton_antipo_N"/>
</dbReference>
<dbReference type="NCBIfam" id="TIGR01974">
    <property type="entry name" value="NDH_I_L"/>
    <property type="match status" value="1"/>
</dbReference>
<dbReference type="NCBIfam" id="NF005141">
    <property type="entry name" value="PRK06590.1"/>
    <property type="match status" value="1"/>
</dbReference>
<dbReference type="PANTHER" id="PTHR42829">
    <property type="entry name" value="NADH-UBIQUINONE OXIDOREDUCTASE CHAIN 5"/>
    <property type="match status" value="1"/>
</dbReference>
<dbReference type="PANTHER" id="PTHR42829:SF2">
    <property type="entry name" value="NADH-UBIQUINONE OXIDOREDUCTASE CHAIN 5"/>
    <property type="match status" value="1"/>
</dbReference>
<dbReference type="Pfam" id="PF01010">
    <property type="entry name" value="Proton_antipo_C"/>
    <property type="match status" value="1"/>
</dbReference>
<dbReference type="Pfam" id="PF00361">
    <property type="entry name" value="Proton_antipo_M"/>
    <property type="match status" value="1"/>
</dbReference>
<dbReference type="Pfam" id="PF00662">
    <property type="entry name" value="Proton_antipo_N"/>
    <property type="match status" value="1"/>
</dbReference>
<dbReference type="PRINTS" id="PR01434">
    <property type="entry name" value="NADHDHGNASE5"/>
</dbReference>
<dbReference type="PRINTS" id="PR01435">
    <property type="entry name" value="NPOXDRDTASE5"/>
</dbReference>
<evidence type="ECO:0000250" key="1"/>
<evidence type="ECO:0000255" key="2"/>
<evidence type="ECO:0000305" key="3"/>
<sequence length="739" mass="83255">MEHTFQYAWVIPFVPLPVTMSIGLGLLLVPTATKNLRRMWAFPSVLLLSITMVFSSNLSIQQINGSFIYQYLWSWTINNDFSLEFGYLIDPLTSIMSILITTVGIVVLIYSDNYMSHDQGYLRFLSYMSFSNTSMLGLVTSSNLIQIHIFWELVGMCSYLLIGFWSTRTVAANACQKAFVTNRIGDFGLLLGILGLYWITGSFEFRDLFEIFKNLIHSNGVHFVFATLCASLLFVGAVAKSAQFPLHVWLPDAMEVPTPISALIHAATMVAAGIFLVARLLPIFTVIPYIMNLIALIGVITVLLGATLALAQRDIKRSLAYSTMSQLGYTMLALGIGSYRAALFHLITHAYSKALLFLGSGSIIHSMEPIVGYSPDKSQNMVLMGGLRKYIPITKTTFLLGTFSLCGIPPLACFWSKDEILNDSWLYSPIFAIIAYSTAGLTAFYMFRMYLLTFEGHLHIHFQNYNSIKNGSLYSISIWGKEGPKPVKINFVLSTMNNNEKVSFFSKKTYQIDGNVRNLMRSFSIHFYNKETSVYPQESDNTMLFPLLVLVLFTLFVGSIGISGVTDMDFDILSKWLTPSINLLHKNLSYSPDWYEFFINAIFSVSISYFGILIAFLLYGSVYSSFQNLDLINLFVKTGSKKILLDRIKNVIYNWSYNRGYIDVFYATALTRGIRGLAQLTHFFDRRAIDGITNGVGVASFFVGEGIKYVGGGRISSYLFLYLFYIIIIIFLLIFWSLI</sequence>
<feature type="chain" id="PRO_0000360921" description="NAD(P)H-quinone oxidoreductase subunit 5, chloroplastic">
    <location>
        <begin position="1"/>
        <end position="739"/>
    </location>
</feature>
<feature type="transmembrane region" description="Helical" evidence="2">
    <location>
        <begin position="9"/>
        <end position="29"/>
    </location>
</feature>
<feature type="transmembrane region" description="Helical" evidence="2">
    <location>
        <begin position="40"/>
        <end position="60"/>
    </location>
</feature>
<feature type="transmembrane region" description="Helical" evidence="2">
    <location>
        <begin position="89"/>
        <end position="109"/>
    </location>
</feature>
<feature type="transmembrane region" description="Helical" evidence="2">
    <location>
        <begin position="144"/>
        <end position="164"/>
    </location>
</feature>
<feature type="transmembrane region" description="Helical" evidence="2">
    <location>
        <begin position="184"/>
        <end position="204"/>
    </location>
</feature>
<feature type="transmembrane region" description="Helical" evidence="2">
    <location>
        <begin position="219"/>
        <end position="239"/>
    </location>
</feature>
<feature type="transmembrane region" description="Helical" evidence="2">
    <location>
        <begin position="258"/>
        <end position="278"/>
    </location>
</feature>
<feature type="transmembrane region" description="Helical" evidence="2">
    <location>
        <begin position="280"/>
        <end position="300"/>
    </location>
</feature>
<feature type="transmembrane region" description="Helical" evidence="2">
    <location>
        <begin position="327"/>
        <end position="347"/>
    </location>
</feature>
<feature type="transmembrane region" description="Helical" evidence="2">
    <location>
        <begin position="354"/>
        <end position="374"/>
    </location>
</feature>
<feature type="transmembrane region" description="Helical" evidence="2">
    <location>
        <begin position="396"/>
        <end position="416"/>
    </location>
</feature>
<feature type="transmembrane region" description="Helical" evidence="2">
    <location>
        <begin position="425"/>
        <end position="445"/>
    </location>
</feature>
<feature type="transmembrane region" description="Helical" evidence="2">
    <location>
        <begin position="542"/>
        <end position="562"/>
    </location>
</feature>
<feature type="transmembrane region" description="Helical" evidence="2">
    <location>
        <begin position="597"/>
        <end position="617"/>
    </location>
</feature>
<feature type="transmembrane region" description="Helical" evidence="2">
    <location>
        <begin position="719"/>
        <end position="739"/>
    </location>
</feature>
<protein>
    <recommendedName>
        <fullName>NAD(P)H-quinone oxidoreductase subunit 5, chloroplastic</fullName>
        <ecNumber>7.1.1.-</ecNumber>
    </recommendedName>
    <alternativeName>
        <fullName>NAD(P)H dehydrogenase subunit 5</fullName>
    </alternativeName>
    <alternativeName>
        <fullName>NADH-plastoquinone oxidoreductase subunit 5</fullName>
    </alternativeName>
</protein>
<name>NU5C_CHLSC</name>
<gene>
    <name type="primary">ndhF</name>
</gene>
<geneLocation type="chloroplast"/>
<organism>
    <name type="scientific">Chloranthus spicatus</name>
    <name type="common">Chulantree</name>
    <name type="synonym">Nigrina spicata</name>
    <dbReference type="NCBI Taxonomy" id="13006"/>
    <lineage>
        <taxon>Eukaryota</taxon>
        <taxon>Viridiplantae</taxon>
        <taxon>Streptophyta</taxon>
        <taxon>Embryophyta</taxon>
        <taxon>Tracheophyta</taxon>
        <taxon>Spermatophyta</taxon>
        <taxon>Magnoliopsida</taxon>
        <taxon>Chloranthales</taxon>
        <taxon>Chloranthaceae</taxon>
        <taxon>Chloranthus</taxon>
    </lineage>
</organism>
<keyword id="KW-0150">Chloroplast</keyword>
<keyword id="KW-0472">Membrane</keyword>
<keyword id="KW-0520">NAD</keyword>
<keyword id="KW-0521">NADP</keyword>
<keyword id="KW-0934">Plastid</keyword>
<keyword id="KW-0618">Plastoquinone</keyword>
<keyword id="KW-0874">Quinone</keyword>
<keyword id="KW-0793">Thylakoid</keyword>
<keyword id="KW-1278">Translocase</keyword>
<keyword id="KW-0812">Transmembrane</keyword>
<keyword id="KW-1133">Transmembrane helix</keyword>
<keyword id="KW-0813">Transport</keyword>
<reference key="1">
    <citation type="journal article" date="2007" name="Mol. Phylogenet. Evol.">
        <title>Phylogenetic and evolutionary implications of complete chloroplast genome sequences of four early-diverging angiosperms: Buxus (Buxaceae), Chloranthus (Chloranthaceae), Dioscorea (Dioscoreaceae), and Illicium (Schisandraceae).</title>
        <authorList>
            <person name="Hansen D.R."/>
            <person name="Dastidar S.G."/>
            <person name="Cai Z."/>
            <person name="Penaflor C."/>
            <person name="Kuehl J.V."/>
            <person name="Boore J.L."/>
            <person name="Jansen R.K."/>
        </authorList>
    </citation>
    <scope>NUCLEOTIDE SEQUENCE [LARGE SCALE GENOMIC DNA]</scope>
</reference>
<comment type="function">
    <text evidence="1">NDH shuttles electrons from NAD(P)H:plastoquinone, via FMN and iron-sulfur (Fe-S) centers, to quinones in the photosynthetic chain and possibly in a chloroplast respiratory chain. The immediate electron acceptor for the enzyme in this species is believed to be plastoquinone. Couples the redox reaction to proton translocation, and thus conserves the redox energy in a proton gradient (By similarity).</text>
</comment>
<comment type="catalytic activity">
    <reaction>
        <text>a plastoquinone + NADH + (n+1) H(+)(in) = a plastoquinol + NAD(+) + n H(+)(out)</text>
        <dbReference type="Rhea" id="RHEA:42608"/>
        <dbReference type="Rhea" id="RHEA-COMP:9561"/>
        <dbReference type="Rhea" id="RHEA-COMP:9562"/>
        <dbReference type="ChEBI" id="CHEBI:15378"/>
        <dbReference type="ChEBI" id="CHEBI:17757"/>
        <dbReference type="ChEBI" id="CHEBI:57540"/>
        <dbReference type="ChEBI" id="CHEBI:57945"/>
        <dbReference type="ChEBI" id="CHEBI:62192"/>
    </reaction>
</comment>
<comment type="catalytic activity">
    <reaction>
        <text>a plastoquinone + NADPH + (n+1) H(+)(in) = a plastoquinol + NADP(+) + n H(+)(out)</text>
        <dbReference type="Rhea" id="RHEA:42612"/>
        <dbReference type="Rhea" id="RHEA-COMP:9561"/>
        <dbReference type="Rhea" id="RHEA-COMP:9562"/>
        <dbReference type="ChEBI" id="CHEBI:15378"/>
        <dbReference type="ChEBI" id="CHEBI:17757"/>
        <dbReference type="ChEBI" id="CHEBI:57783"/>
        <dbReference type="ChEBI" id="CHEBI:58349"/>
        <dbReference type="ChEBI" id="CHEBI:62192"/>
    </reaction>
</comment>
<comment type="subunit">
    <text evidence="1">NDH is composed of at least 16 different subunits, 5 of which are encoded in the nucleus.</text>
</comment>
<comment type="subcellular location">
    <subcellularLocation>
        <location evidence="1">Plastid</location>
        <location evidence="1">Chloroplast thylakoid membrane</location>
        <topology evidence="1">Multi-pass membrane protein</topology>
    </subcellularLocation>
</comment>
<comment type="similarity">
    <text evidence="3">Belongs to the complex I subunit 5 family.</text>
</comment>